<accession>Q8BJI1</accession>
<accession>B2RUH5</accession>
<accession>Q8C057</accession>
<accession>Q8CGQ9</accession>
<sequence length="727" mass="81071">MPKNSKVTQREHSNEHVTESVADLLALEEPVDYKQSVLNVAGETGGKQKVAEEELDTEDRPAWNSKLQYILAQIGFSVGLGNIWRFPYLCQKNGGGAYLVPYLVLLIIIGIPLFFLELAVGQRIRRGSIGVWHYVCPRLGGIGFSSCIVCLFVGLYYNVIIGWSVFYFFKSFQYPLPWSECPVIRNGTVAVVEPECEKSSATTYFWYREALDISNSISESGGLNWKMTLCLLVAWSIVGMAVVKGIQSSGKVMYFSSLFPYVVLACFLVRGLLLRGAVDGILHMFTPKLDKMLDPQVWREAATQVFFALGLGFGGVIAFSSYNKQDNNCHFDAALVSFINFFTSVLATLVVFAVLGFKANIMNEKCVVENAEKILGYLNSNVLSRDLIPPHVNFSHLTTKDYSEMYSVIMTVKEKQFPALGLDPCLLEDELDKSVQGTGLAFIAFTEAMTHFPASPFWSVMFFLMLINLGLGSMIGTMAGITTPIIDTFKVPKEMFTVGCCVFAFFVGLLFVQRSGNYFVTMFDDYSATLPLTVIVILENIAVAWIYGTKKFMQELTEMLGFQPYRFYFYMWKFVSPLCMAVLTTASIIQLGVSPPGYSAWIKEEAAERYLYFPNWAMALLITLIAVATLPIPVVFILRHFHLLSDGSNTLSVSYKKGRMMKDISNLEENDETRFILSKVPSEAPSPMPTHRSYLGPGSTSPLDNSNNPNGRYGSGYLLASTPESEL</sequence>
<keyword id="KW-0029">Amino-acid transport</keyword>
<keyword id="KW-0966">Cell projection</keyword>
<keyword id="KW-0968">Cytoplasmic vesicle</keyword>
<keyword id="KW-0325">Glycoprotein</keyword>
<keyword id="KW-0406">Ion transport</keyword>
<keyword id="KW-0472">Membrane</keyword>
<keyword id="KW-0532">Neurotransmitter transport</keyword>
<keyword id="KW-0597">Phosphoprotein</keyword>
<keyword id="KW-1185">Reference proteome</keyword>
<keyword id="KW-0915">Sodium</keyword>
<keyword id="KW-0739">Sodium transport</keyword>
<keyword id="KW-0769">Symport</keyword>
<keyword id="KW-0770">Synapse</keyword>
<keyword id="KW-0812">Transmembrane</keyword>
<keyword id="KW-1133">Transmembrane helix</keyword>
<keyword id="KW-0813">Transport</keyword>
<dbReference type="EMBL" id="AY155578">
    <property type="protein sequence ID" value="AAN75010.1"/>
    <property type="molecule type" value="mRNA"/>
</dbReference>
<dbReference type="EMBL" id="AK083807">
    <property type="protein sequence ID" value="BAC39024.1"/>
    <property type="molecule type" value="mRNA"/>
</dbReference>
<dbReference type="EMBL" id="AK032262">
    <property type="protein sequence ID" value="BAC27785.1"/>
    <property type="molecule type" value="mRNA"/>
</dbReference>
<dbReference type="EMBL" id="BC141148">
    <property type="protein sequence ID" value="AAI41149.1"/>
    <property type="molecule type" value="mRNA"/>
</dbReference>
<dbReference type="EMBL" id="BC171962">
    <property type="protein sequence ID" value="AAI71962.1"/>
    <property type="molecule type" value="mRNA"/>
</dbReference>
<dbReference type="CCDS" id="CCDS79998.1"/>
<dbReference type="PIR" id="C46027">
    <property type="entry name" value="C46027"/>
</dbReference>
<dbReference type="RefSeq" id="NP_001280618.1">
    <property type="nucleotide sequence ID" value="NM_001293689.1"/>
</dbReference>
<dbReference type="RefSeq" id="NP_758475.1">
    <property type="nucleotide sequence ID" value="NM_172271.2"/>
</dbReference>
<dbReference type="RefSeq" id="XP_006501469.1">
    <property type="nucleotide sequence ID" value="XM_006501406.4"/>
</dbReference>
<dbReference type="RefSeq" id="XP_006501470.1">
    <property type="nucleotide sequence ID" value="XM_006501407.4"/>
</dbReference>
<dbReference type="SMR" id="Q8BJI1"/>
<dbReference type="BioGRID" id="230889">
    <property type="interactions" value="2"/>
</dbReference>
<dbReference type="FunCoup" id="Q8BJI1">
    <property type="interactions" value="145"/>
</dbReference>
<dbReference type="STRING" id="10090.ENSMUSP00000129379"/>
<dbReference type="GlyConnect" id="2722">
    <property type="glycosylation" value="3 N-Linked glycans (2 sites)"/>
</dbReference>
<dbReference type="GlyCosmos" id="Q8BJI1">
    <property type="glycosylation" value="2 sites, 3 glycans"/>
</dbReference>
<dbReference type="GlyGen" id="Q8BJI1">
    <property type="glycosylation" value="2 sites, 5 N-linked glycans (2 sites)"/>
</dbReference>
<dbReference type="iPTMnet" id="Q8BJI1"/>
<dbReference type="PhosphoSitePlus" id="Q8BJI1"/>
<dbReference type="SwissPalm" id="Q8BJI1"/>
<dbReference type="PaxDb" id="10090-ENSMUSP00000029499"/>
<dbReference type="PeptideAtlas" id="Q8BJI1"/>
<dbReference type="ProteomicsDB" id="255448"/>
<dbReference type="Antibodypedia" id="1942">
    <property type="antibodies" value="90 antibodies from 20 providers"/>
</dbReference>
<dbReference type="DNASU" id="229706"/>
<dbReference type="Ensembl" id="ENSMUST00000169449.8">
    <property type="protein sequence ID" value="ENSMUSP00000129379.2"/>
    <property type="gene ID" value="ENSMUSG00000027894.15"/>
</dbReference>
<dbReference type="GeneID" id="229706"/>
<dbReference type="KEGG" id="mmu:229706"/>
<dbReference type="UCSC" id="uc008qxb.1">
    <property type="organism name" value="mouse"/>
</dbReference>
<dbReference type="AGR" id="MGI:2442535"/>
<dbReference type="CTD" id="388662"/>
<dbReference type="MGI" id="MGI:2442535">
    <property type="gene designation" value="Slc6a17"/>
</dbReference>
<dbReference type="VEuPathDB" id="HostDB:ENSMUSG00000027894"/>
<dbReference type="eggNOG" id="KOG3659">
    <property type="taxonomic scope" value="Eukaryota"/>
</dbReference>
<dbReference type="GeneTree" id="ENSGT00940000156542"/>
<dbReference type="InParanoid" id="Q8BJI1"/>
<dbReference type="OrthoDB" id="6581954at2759"/>
<dbReference type="PhylomeDB" id="Q8BJI1"/>
<dbReference type="TreeFam" id="TF352709"/>
<dbReference type="BioGRID-ORCS" id="229706">
    <property type="hits" value="1 hit in 78 CRISPR screens"/>
</dbReference>
<dbReference type="ChiTaRS" id="Slc6a17">
    <property type="organism name" value="mouse"/>
</dbReference>
<dbReference type="PRO" id="PR:Q8BJI1"/>
<dbReference type="Proteomes" id="UP000000589">
    <property type="component" value="Chromosome 3"/>
</dbReference>
<dbReference type="RNAct" id="Q8BJI1">
    <property type="molecule type" value="protein"/>
</dbReference>
<dbReference type="Bgee" id="ENSMUSG00000027894">
    <property type="expression patterns" value="Expressed in primary visual cortex and 151 other cell types or tissues"/>
</dbReference>
<dbReference type="ExpressionAtlas" id="Q8BJI1">
    <property type="expression patterns" value="baseline and differential"/>
</dbReference>
<dbReference type="GO" id="GO:0042995">
    <property type="term" value="C:cell projection"/>
    <property type="evidence" value="ECO:0007669"/>
    <property type="project" value="UniProtKB-KW"/>
</dbReference>
<dbReference type="GO" id="GO:0098982">
    <property type="term" value="C:GABA-ergic synapse"/>
    <property type="evidence" value="ECO:0007669"/>
    <property type="project" value="Ensembl"/>
</dbReference>
<dbReference type="GO" id="GO:0098978">
    <property type="term" value="C:glutamatergic synapse"/>
    <property type="evidence" value="ECO:0007669"/>
    <property type="project" value="Ensembl"/>
</dbReference>
<dbReference type="GO" id="GO:0005886">
    <property type="term" value="C:plasma membrane"/>
    <property type="evidence" value="ECO:0007669"/>
    <property type="project" value="InterPro"/>
</dbReference>
<dbReference type="GO" id="GO:0098794">
    <property type="term" value="C:postsynapse"/>
    <property type="evidence" value="ECO:0007669"/>
    <property type="project" value="UniProtKB-SubCell"/>
</dbReference>
<dbReference type="GO" id="GO:0008021">
    <property type="term" value="C:synaptic vesicle"/>
    <property type="evidence" value="ECO:0000250"/>
    <property type="project" value="UniProtKB"/>
</dbReference>
<dbReference type="GO" id="GO:0030672">
    <property type="term" value="C:synaptic vesicle membrane"/>
    <property type="evidence" value="ECO:0007669"/>
    <property type="project" value="UniProtKB-SubCell"/>
</dbReference>
<dbReference type="GO" id="GO:0015293">
    <property type="term" value="F:symporter activity"/>
    <property type="evidence" value="ECO:0007669"/>
    <property type="project" value="UniProtKB-KW"/>
</dbReference>
<dbReference type="GO" id="GO:0032328">
    <property type="term" value="P:alanine transport"/>
    <property type="evidence" value="ECO:0000250"/>
    <property type="project" value="UniProtKB"/>
</dbReference>
<dbReference type="GO" id="GO:0007420">
    <property type="term" value="P:brain development"/>
    <property type="evidence" value="ECO:0000314"/>
    <property type="project" value="UniProtKB"/>
</dbReference>
<dbReference type="GO" id="GO:0015816">
    <property type="term" value="P:glycine transport"/>
    <property type="evidence" value="ECO:0000250"/>
    <property type="project" value="UniProtKB"/>
</dbReference>
<dbReference type="GO" id="GO:0015820">
    <property type="term" value="P:L-leucine transport"/>
    <property type="evidence" value="ECO:0000250"/>
    <property type="project" value="UniProtKB"/>
</dbReference>
<dbReference type="GO" id="GO:0006836">
    <property type="term" value="P:neurotransmitter transport"/>
    <property type="evidence" value="ECO:0007669"/>
    <property type="project" value="UniProtKB-KW"/>
</dbReference>
<dbReference type="GO" id="GO:0015804">
    <property type="term" value="P:neutral amino acid transport"/>
    <property type="evidence" value="ECO:0000250"/>
    <property type="project" value="UniProtKB"/>
</dbReference>
<dbReference type="GO" id="GO:0015824">
    <property type="term" value="P:proline transport"/>
    <property type="evidence" value="ECO:0000250"/>
    <property type="project" value="UniProtKB"/>
</dbReference>
<dbReference type="GO" id="GO:0030163">
    <property type="term" value="P:protein catabolic process"/>
    <property type="evidence" value="ECO:0007669"/>
    <property type="project" value="Ensembl"/>
</dbReference>
<dbReference type="GO" id="GO:0006814">
    <property type="term" value="P:sodium ion transport"/>
    <property type="evidence" value="ECO:0007669"/>
    <property type="project" value="UniProtKB-KW"/>
</dbReference>
<dbReference type="CDD" id="cd11521">
    <property type="entry name" value="SLC6sbd_NTT4"/>
    <property type="match status" value="1"/>
</dbReference>
<dbReference type="InterPro" id="IPR000175">
    <property type="entry name" value="Na/ntran_symport"/>
</dbReference>
<dbReference type="InterPro" id="IPR002438">
    <property type="entry name" value="Neutral_aa_SLC6"/>
</dbReference>
<dbReference type="InterPro" id="IPR037272">
    <property type="entry name" value="SNS_sf"/>
</dbReference>
<dbReference type="NCBIfam" id="NF037979">
    <property type="entry name" value="Na_transp"/>
    <property type="match status" value="1"/>
</dbReference>
<dbReference type="PANTHER" id="PTHR11616:SF102">
    <property type="entry name" value="SODIUM-DEPENDENT NEUTRAL AMINO ACID TRANSPORTER SLC6A17"/>
    <property type="match status" value="1"/>
</dbReference>
<dbReference type="PANTHER" id="PTHR11616">
    <property type="entry name" value="SODIUM/CHLORIDE DEPENDENT TRANSPORTER"/>
    <property type="match status" value="1"/>
</dbReference>
<dbReference type="Pfam" id="PF00209">
    <property type="entry name" value="SNF"/>
    <property type="match status" value="1"/>
</dbReference>
<dbReference type="PRINTS" id="PR00176">
    <property type="entry name" value="NANEUSMPORT"/>
</dbReference>
<dbReference type="PRINTS" id="PR01206">
    <property type="entry name" value="ORPHTRNSPORT"/>
</dbReference>
<dbReference type="SUPFAM" id="SSF161070">
    <property type="entry name" value="SNF-like"/>
    <property type="match status" value="1"/>
</dbReference>
<dbReference type="PROSITE" id="PS00610">
    <property type="entry name" value="NA_NEUROTRAN_SYMP_1"/>
    <property type="match status" value="1"/>
</dbReference>
<dbReference type="PROSITE" id="PS00754">
    <property type="entry name" value="NA_NEUROTRAN_SYMP_2"/>
    <property type="match status" value="1"/>
</dbReference>
<dbReference type="PROSITE" id="PS50267">
    <property type="entry name" value="NA_NEUROTRAN_SYMP_3"/>
    <property type="match status" value="1"/>
</dbReference>
<name>S6A17_MOUSE</name>
<feature type="chain" id="PRO_0000214804" description="Sodium-dependent neutral amino acid transporter SLC6A17">
    <location>
        <begin position="1"/>
        <end position="727"/>
    </location>
</feature>
<feature type="topological domain" description="Cytoplasmic" evidence="2">
    <location>
        <begin position="1"/>
        <end position="68"/>
    </location>
</feature>
<feature type="transmembrane region" description="Helical; Name=1" evidence="2">
    <location>
        <begin position="69"/>
        <end position="89"/>
    </location>
</feature>
<feature type="topological domain" description="Extracellular" evidence="2">
    <location>
        <begin position="90"/>
        <end position="96"/>
    </location>
</feature>
<feature type="transmembrane region" description="Helical; Name=2" evidence="2">
    <location>
        <begin position="97"/>
        <end position="116"/>
    </location>
</feature>
<feature type="topological domain" description="Cytoplasmic" evidence="2">
    <location>
        <begin position="117"/>
        <end position="140"/>
    </location>
</feature>
<feature type="transmembrane region" description="Helical; Name=3" evidence="2">
    <location>
        <begin position="141"/>
        <end position="161"/>
    </location>
</feature>
<feature type="topological domain" description="Extracellular" evidence="2">
    <location>
        <begin position="162"/>
        <end position="224"/>
    </location>
</feature>
<feature type="transmembrane region" description="Helical; Name=4" evidence="2">
    <location>
        <begin position="225"/>
        <end position="243"/>
    </location>
</feature>
<feature type="topological domain" description="Cytoplasmic" evidence="2">
    <location>
        <begin position="244"/>
        <end position="251"/>
    </location>
</feature>
<feature type="transmembrane region" description="Helical; Name=5" evidence="2">
    <location>
        <begin position="252"/>
        <end position="269"/>
    </location>
</feature>
<feature type="topological domain" description="Extracellular" evidence="2">
    <location>
        <begin position="270"/>
        <end position="304"/>
    </location>
</feature>
<feature type="transmembrane region" description="Helical; Name=6" evidence="2">
    <location>
        <begin position="305"/>
        <end position="322"/>
    </location>
</feature>
<feature type="topological domain" description="Cytoplasmic" evidence="2">
    <location>
        <begin position="323"/>
        <end position="333"/>
    </location>
</feature>
<feature type="transmembrane region" description="Helical; Name=7" evidence="2">
    <location>
        <begin position="334"/>
        <end position="355"/>
    </location>
</feature>
<feature type="topological domain" description="Extracellular" evidence="2">
    <location>
        <begin position="356"/>
        <end position="451"/>
    </location>
</feature>
<feature type="transmembrane region" description="Helical; Name=8" evidence="2">
    <location>
        <begin position="452"/>
        <end position="471"/>
    </location>
</feature>
<feature type="topological domain" description="Cytoplasmic" evidence="2">
    <location>
        <begin position="472"/>
        <end position="494"/>
    </location>
</feature>
<feature type="transmembrane region" description="Helical; Name=9" evidence="2">
    <location>
        <begin position="495"/>
        <end position="513"/>
    </location>
</feature>
<feature type="topological domain" description="Extracellular" evidence="2">
    <location>
        <begin position="514"/>
        <end position="528"/>
    </location>
</feature>
<feature type="transmembrane region" description="Helical; Name=10" evidence="2">
    <location>
        <begin position="529"/>
        <end position="549"/>
    </location>
</feature>
<feature type="topological domain" description="Cytoplasmic" evidence="2">
    <location>
        <begin position="550"/>
        <end position="569"/>
    </location>
</feature>
<feature type="transmembrane region" description="Helical; Name=11" evidence="2">
    <location>
        <begin position="570"/>
        <end position="591"/>
    </location>
</feature>
<feature type="topological domain" description="Extracellular" evidence="2">
    <location>
        <begin position="592"/>
        <end position="618"/>
    </location>
</feature>
<feature type="transmembrane region" description="Helical; Name=12" evidence="2">
    <location>
        <begin position="619"/>
        <end position="641"/>
    </location>
</feature>
<feature type="topological domain" description="Cytoplasmic" evidence="2">
    <location>
        <begin position="642"/>
        <end position="727"/>
    </location>
</feature>
<feature type="region of interest" description="Disordered" evidence="3">
    <location>
        <begin position="680"/>
        <end position="727"/>
    </location>
</feature>
<feature type="compositionally biased region" description="Polar residues" evidence="3">
    <location>
        <begin position="698"/>
        <end position="710"/>
    </location>
</feature>
<feature type="modified residue" description="Phosphoserine" evidence="7">
    <location>
        <position position="13"/>
    </location>
</feature>
<feature type="modified residue" description="Phosphoserine" evidence="7">
    <location>
        <position position="20"/>
    </location>
</feature>
<feature type="modified residue" description="Phosphotyrosine" evidence="6">
    <location>
        <position position="377"/>
    </location>
</feature>
<feature type="modified residue" description="Phosphoserine" evidence="7">
    <location>
        <position position="665"/>
    </location>
</feature>
<feature type="modified residue" description="Phosphoserine" evidence="1">
    <location>
        <position position="701"/>
    </location>
</feature>
<feature type="glycosylation site" description="N-linked (GlcNAc...) asparagine" evidence="2">
    <location>
        <position position="186"/>
    </location>
</feature>
<feature type="glycosylation site" description="N-linked (GlcNAc...) asparagine" evidence="2">
    <location>
        <position position="393"/>
    </location>
</feature>
<feature type="sequence conflict" description="In Ref. 1; AAN75010." evidence="5" ref="1">
    <location>
        <begin position="434"/>
        <end position="436"/>
    </location>
</feature>
<evidence type="ECO:0000250" key="1">
    <source>
        <dbReference type="UniProtKB" id="P31662"/>
    </source>
</evidence>
<evidence type="ECO:0000255" key="2"/>
<evidence type="ECO:0000256" key="3">
    <source>
        <dbReference type="SAM" id="MobiDB-lite"/>
    </source>
</evidence>
<evidence type="ECO:0000269" key="4">
    <source>
    </source>
</evidence>
<evidence type="ECO:0000305" key="5"/>
<evidence type="ECO:0007744" key="6">
    <source>
    </source>
</evidence>
<evidence type="ECO:0007744" key="7">
    <source>
    </source>
</evidence>
<organism>
    <name type="scientific">Mus musculus</name>
    <name type="common">Mouse</name>
    <dbReference type="NCBI Taxonomy" id="10090"/>
    <lineage>
        <taxon>Eukaryota</taxon>
        <taxon>Metazoa</taxon>
        <taxon>Chordata</taxon>
        <taxon>Craniata</taxon>
        <taxon>Vertebrata</taxon>
        <taxon>Euteleostomi</taxon>
        <taxon>Mammalia</taxon>
        <taxon>Eutheria</taxon>
        <taxon>Euarchontoglires</taxon>
        <taxon>Glires</taxon>
        <taxon>Rodentia</taxon>
        <taxon>Myomorpha</taxon>
        <taxon>Muroidea</taxon>
        <taxon>Muridae</taxon>
        <taxon>Murinae</taxon>
        <taxon>Mus</taxon>
        <taxon>Mus</taxon>
    </lineage>
</organism>
<gene>
    <name evidence="1" type="primary">Slc6a17</name>
    <name evidence="1" type="synonym">Ntt4</name>
</gene>
<reference key="1">
    <citation type="submission" date="2002-09" db="EMBL/GenBank/DDBJ databases">
        <title>Sodium and chloride dependent mouse orphan neurotransmitter transporter NTT4 cDNA.</title>
        <authorList>
            <person name="Liu Q.-R."/>
            <person name="Uhl G.R."/>
        </authorList>
    </citation>
    <scope>NUCLEOTIDE SEQUENCE [MRNA]</scope>
    <source>
        <strain>C57BL/6J</strain>
    </source>
</reference>
<reference key="2">
    <citation type="journal article" date="2005" name="Science">
        <title>The transcriptional landscape of the mammalian genome.</title>
        <authorList>
            <person name="Carninci P."/>
            <person name="Kasukawa T."/>
            <person name="Katayama S."/>
            <person name="Gough J."/>
            <person name="Frith M.C."/>
            <person name="Maeda N."/>
            <person name="Oyama R."/>
            <person name="Ravasi T."/>
            <person name="Lenhard B."/>
            <person name="Wells C."/>
            <person name="Kodzius R."/>
            <person name="Shimokawa K."/>
            <person name="Bajic V.B."/>
            <person name="Brenner S.E."/>
            <person name="Batalov S."/>
            <person name="Forrest A.R."/>
            <person name="Zavolan M."/>
            <person name="Davis M.J."/>
            <person name="Wilming L.G."/>
            <person name="Aidinis V."/>
            <person name="Allen J.E."/>
            <person name="Ambesi-Impiombato A."/>
            <person name="Apweiler R."/>
            <person name="Aturaliya R.N."/>
            <person name="Bailey T.L."/>
            <person name="Bansal M."/>
            <person name="Baxter L."/>
            <person name="Beisel K.W."/>
            <person name="Bersano T."/>
            <person name="Bono H."/>
            <person name="Chalk A.M."/>
            <person name="Chiu K.P."/>
            <person name="Choudhary V."/>
            <person name="Christoffels A."/>
            <person name="Clutterbuck D.R."/>
            <person name="Crowe M.L."/>
            <person name="Dalla E."/>
            <person name="Dalrymple B.P."/>
            <person name="de Bono B."/>
            <person name="Della Gatta G."/>
            <person name="di Bernardo D."/>
            <person name="Down T."/>
            <person name="Engstrom P."/>
            <person name="Fagiolini M."/>
            <person name="Faulkner G."/>
            <person name="Fletcher C.F."/>
            <person name="Fukushima T."/>
            <person name="Furuno M."/>
            <person name="Futaki S."/>
            <person name="Gariboldi M."/>
            <person name="Georgii-Hemming P."/>
            <person name="Gingeras T.R."/>
            <person name="Gojobori T."/>
            <person name="Green R.E."/>
            <person name="Gustincich S."/>
            <person name="Harbers M."/>
            <person name="Hayashi Y."/>
            <person name="Hensch T.K."/>
            <person name="Hirokawa N."/>
            <person name="Hill D."/>
            <person name="Huminiecki L."/>
            <person name="Iacono M."/>
            <person name="Ikeo K."/>
            <person name="Iwama A."/>
            <person name="Ishikawa T."/>
            <person name="Jakt M."/>
            <person name="Kanapin A."/>
            <person name="Katoh M."/>
            <person name="Kawasawa Y."/>
            <person name="Kelso J."/>
            <person name="Kitamura H."/>
            <person name="Kitano H."/>
            <person name="Kollias G."/>
            <person name="Krishnan S.P."/>
            <person name="Kruger A."/>
            <person name="Kummerfeld S.K."/>
            <person name="Kurochkin I.V."/>
            <person name="Lareau L.F."/>
            <person name="Lazarevic D."/>
            <person name="Lipovich L."/>
            <person name="Liu J."/>
            <person name="Liuni S."/>
            <person name="McWilliam S."/>
            <person name="Madan Babu M."/>
            <person name="Madera M."/>
            <person name="Marchionni L."/>
            <person name="Matsuda H."/>
            <person name="Matsuzawa S."/>
            <person name="Miki H."/>
            <person name="Mignone F."/>
            <person name="Miyake S."/>
            <person name="Morris K."/>
            <person name="Mottagui-Tabar S."/>
            <person name="Mulder N."/>
            <person name="Nakano N."/>
            <person name="Nakauchi H."/>
            <person name="Ng P."/>
            <person name="Nilsson R."/>
            <person name="Nishiguchi S."/>
            <person name="Nishikawa S."/>
            <person name="Nori F."/>
            <person name="Ohara O."/>
            <person name="Okazaki Y."/>
            <person name="Orlando V."/>
            <person name="Pang K.C."/>
            <person name="Pavan W.J."/>
            <person name="Pavesi G."/>
            <person name="Pesole G."/>
            <person name="Petrovsky N."/>
            <person name="Piazza S."/>
            <person name="Reed J."/>
            <person name="Reid J.F."/>
            <person name="Ring B.Z."/>
            <person name="Ringwald M."/>
            <person name="Rost B."/>
            <person name="Ruan Y."/>
            <person name="Salzberg S.L."/>
            <person name="Sandelin A."/>
            <person name="Schneider C."/>
            <person name="Schoenbach C."/>
            <person name="Sekiguchi K."/>
            <person name="Semple C.A."/>
            <person name="Seno S."/>
            <person name="Sessa L."/>
            <person name="Sheng Y."/>
            <person name="Shibata Y."/>
            <person name="Shimada H."/>
            <person name="Shimada K."/>
            <person name="Silva D."/>
            <person name="Sinclair B."/>
            <person name="Sperling S."/>
            <person name="Stupka E."/>
            <person name="Sugiura K."/>
            <person name="Sultana R."/>
            <person name="Takenaka Y."/>
            <person name="Taki K."/>
            <person name="Tammoja K."/>
            <person name="Tan S.L."/>
            <person name="Tang S."/>
            <person name="Taylor M.S."/>
            <person name="Tegner J."/>
            <person name="Teichmann S.A."/>
            <person name="Ueda H.R."/>
            <person name="van Nimwegen E."/>
            <person name="Verardo R."/>
            <person name="Wei C.L."/>
            <person name="Yagi K."/>
            <person name="Yamanishi H."/>
            <person name="Zabarovsky E."/>
            <person name="Zhu S."/>
            <person name="Zimmer A."/>
            <person name="Hide W."/>
            <person name="Bult C."/>
            <person name="Grimmond S.M."/>
            <person name="Teasdale R.D."/>
            <person name="Liu E.T."/>
            <person name="Brusic V."/>
            <person name="Quackenbush J."/>
            <person name="Wahlestedt C."/>
            <person name="Mattick J.S."/>
            <person name="Hume D.A."/>
            <person name="Kai C."/>
            <person name="Sasaki D."/>
            <person name="Tomaru Y."/>
            <person name="Fukuda S."/>
            <person name="Kanamori-Katayama M."/>
            <person name="Suzuki M."/>
            <person name="Aoki J."/>
            <person name="Arakawa T."/>
            <person name="Iida J."/>
            <person name="Imamura K."/>
            <person name="Itoh M."/>
            <person name="Kato T."/>
            <person name="Kawaji H."/>
            <person name="Kawagashira N."/>
            <person name="Kawashima T."/>
            <person name="Kojima M."/>
            <person name="Kondo S."/>
            <person name="Konno H."/>
            <person name="Nakano K."/>
            <person name="Ninomiya N."/>
            <person name="Nishio T."/>
            <person name="Okada M."/>
            <person name="Plessy C."/>
            <person name="Shibata K."/>
            <person name="Shiraki T."/>
            <person name="Suzuki S."/>
            <person name="Tagami M."/>
            <person name="Waki K."/>
            <person name="Watahiki A."/>
            <person name="Okamura-Oho Y."/>
            <person name="Suzuki H."/>
            <person name="Kawai J."/>
            <person name="Hayashizaki Y."/>
        </authorList>
    </citation>
    <scope>NUCLEOTIDE SEQUENCE [LARGE SCALE MRNA]</scope>
    <source>
        <strain>C57BL/6J</strain>
        <tissue>Olfactory bulb</tissue>
        <tissue>Spinal ganglion</tissue>
    </source>
</reference>
<reference key="3">
    <citation type="journal article" date="2004" name="Genome Res.">
        <title>The status, quality, and expansion of the NIH full-length cDNA project: the Mammalian Gene Collection (MGC).</title>
        <authorList>
            <consortium name="The MGC Project Team"/>
        </authorList>
    </citation>
    <scope>NUCLEOTIDE SEQUENCE [LARGE SCALE MRNA]</scope>
    <source>
        <tissue>Brain</tissue>
    </source>
</reference>
<reference key="4">
    <citation type="journal article" date="2007" name="Mol. Cell. Proteomics">
        <title>Qualitative and quantitative analyses of protein phosphorylation in naive and stimulated mouse synaptosomal preparations.</title>
        <authorList>
            <person name="Munton R.P."/>
            <person name="Tweedie-Cullen R."/>
            <person name="Livingstone-Zatchej M."/>
            <person name="Weinandy F."/>
            <person name="Waidelich M."/>
            <person name="Longo D."/>
            <person name="Gehrig P."/>
            <person name="Potthast F."/>
            <person name="Rutishauser D."/>
            <person name="Gerrits B."/>
            <person name="Panse C."/>
            <person name="Schlapbach R."/>
            <person name="Mansuy I.M."/>
        </authorList>
    </citation>
    <scope>IDENTIFICATION BY MASS SPECTROMETRY [LARGE SCALE ANALYSIS]</scope>
    <source>
        <tissue>Brain cortex</tissue>
    </source>
</reference>
<reference key="5">
    <citation type="journal article" date="2008" name="J. Proteome Res.">
        <title>Large-scale identification and evolution indexing of tyrosine phosphorylation sites from murine brain.</title>
        <authorList>
            <person name="Ballif B.A."/>
            <person name="Carey G.R."/>
            <person name="Sunyaev S.R."/>
            <person name="Gygi S.P."/>
        </authorList>
    </citation>
    <scope>PHOSPHORYLATION [LARGE SCALE ANALYSIS] AT TYR-377</scope>
    <scope>IDENTIFICATION BY MASS SPECTROMETRY [LARGE SCALE ANALYSIS]</scope>
    <source>
        <tissue>Brain</tissue>
    </source>
</reference>
<reference key="6">
    <citation type="journal article" date="2010" name="Cell">
        <title>A tissue-specific atlas of mouse protein phosphorylation and expression.</title>
        <authorList>
            <person name="Huttlin E.L."/>
            <person name="Jedrychowski M.P."/>
            <person name="Elias J.E."/>
            <person name="Goswami T."/>
            <person name="Rad R."/>
            <person name="Beausoleil S.A."/>
            <person name="Villen J."/>
            <person name="Haas W."/>
            <person name="Sowa M.E."/>
            <person name="Gygi S.P."/>
        </authorList>
    </citation>
    <scope>PHOSPHORYLATION [LARGE SCALE ANALYSIS] AT SER-13; SER-20 AND SER-665</scope>
    <scope>IDENTIFICATION BY MASS SPECTROMETRY [LARGE SCALE ANALYSIS]</scope>
    <source>
        <tissue>Brain</tissue>
    </source>
</reference>
<reference key="7">
    <citation type="journal article" date="2015" name="Am. J. Hum. Genet.">
        <title>Homozygous SLC6A17 mutations cause autosomal-recessive intellectual disability with progressive tremor, speech impairment, and behavioral problems.</title>
        <authorList>
            <person name="Iqbal Z."/>
            <person name="Willemsen M.H."/>
            <person name="Papon M.A."/>
            <person name="Musante L."/>
            <person name="Benevento M."/>
            <person name="Hu H."/>
            <person name="Venselaar H."/>
            <person name="Wissink-Lindhout W.M."/>
            <person name="Vulto-van Silfhout A.T."/>
            <person name="Vissers L.E."/>
            <person name="de Brouwer A.P."/>
            <person name="Marouillat S."/>
            <person name="Wienker T.F."/>
            <person name="Ropers H.H."/>
            <person name="Kahrizi K."/>
            <person name="Nadif Kasri N."/>
            <person name="Najmabadi H."/>
            <person name="Laumonnier F."/>
            <person name="Kleefstra T."/>
            <person name="van Bokhoven H."/>
        </authorList>
    </citation>
    <scope>TISSUE SPECIFICITY</scope>
    <scope>DEVELOPMENTAL STAGE</scope>
    <scope>SUBCELLULAR LOCATION</scope>
</reference>
<protein>
    <recommendedName>
        <fullName>Sodium-dependent neutral amino acid transporter SLC6A17</fullName>
    </recommendedName>
    <alternativeName>
        <fullName>Sodium-dependent neurotransmitter transporter NTT4</fullName>
    </alternativeName>
    <alternativeName>
        <fullName>Solute carrier family 6 member 17</fullName>
    </alternativeName>
</protein>
<comment type="function">
    <text evidence="1">Synaptic vesicle transporter with apparent selectivity for neutral amino acids. The transport is sodium-coupled but chloride-independent, likely driven by the proton electrochemical gradient generated by vacuolar H(+)-ATPase in an overall electrogenic mechanism. May contribute to the synaptic uptake of neurotransmitter precursors in a process coupled in part to vesicle exocytosis.</text>
</comment>
<comment type="catalytic activity">
    <reaction evidence="1">
        <text>L-proline(in) + Na(+)(in) = L-proline(out) + Na(+)(out)</text>
        <dbReference type="Rhea" id="RHEA:28967"/>
        <dbReference type="ChEBI" id="CHEBI:29101"/>
        <dbReference type="ChEBI" id="CHEBI:60039"/>
    </reaction>
</comment>
<comment type="catalytic activity">
    <reaction evidence="1">
        <text>L-leucine(in) + Na(+)(in) = L-leucine(out) + Na(+)(out)</text>
        <dbReference type="Rhea" id="RHEA:29263"/>
        <dbReference type="ChEBI" id="CHEBI:29101"/>
        <dbReference type="ChEBI" id="CHEBI:57427"/>
    </reaction>
</comment>
<comment type="catalytic activity">
    <reaction evidence="1">
        <text>glycine(in) + Na(+)(in) = glycine(out) + Na(+)(out)</text>
        <dbReference type="Rhea" id="RHEA:68228"/>
        <dbReference type="ChEBI" id="CHEBI:29101"/>
        <dbReference type="ChEBI" id="CHEBI:57305"/>
    </reaction>
</comment>
<comment type="catalytic activity">
    <reaction evidence="1">
        <text>L-alanine(in) + Na(+)(in) = L-alanine(out) + Na(+)(out)</text>
        <dbReference type="Rhea" id="RHEA:29283"/>
        <dbReference type="ChEBI" id="CHEBI:29101"/>
        <dbReference type="ChEBI" id="CHEBI:57972"/>
    </reaction>
</comment>
<comment type="catalytic activity">
    <reaction evidence="1">
        <text>L-glutamine(in) + Na(+)(in) = L-glutamine(out) + Na(+)(out)</text>
        <dbReference type="Rhea" id="RHEA:68236"/>
        <dbReference type="ChEBI" id="CHEBI:29101"/>
        <dbReference type="ChEBI" id="CHEBI:58359"/>
    </reaction>
</comment>
<comment type="subcellular location">
    <subcellularLocation>
        <location evidence="1">Cytoplasmic vesicle</location>
        <location evidence="1">Secretory vesicle</location>
        <location evidence="1">Synaptic vesicle membrane</location>
        <topology evidence="1">Multi-pass membrane protein</topology>
    </subcellularLocation>
    <subcellularLocation>
        <location evidence="4">Postsynapse</location>
    </subcellularLocation>
    <subcellularLocation>
        <location evidence="4">Presynapse</location>
    </subcellularLocation>
    <text evidence="4">Localizes at synaptic junctions - at both pre- and post-synaptic sites - particularly in excitatory glutamatergic terminals.</text>
</comment>
<comment type="tissue specificity">
    <text evidence="4">Expressed in the brain. The strongest expression levels in embryonic, postnatal, and adult stages are found in both cortical and hippocampal tissues.</text>
</comment>
<comment type="developmental stage">
    <text evidence="4">Expressed during embryonic brain development and the highest levels are observed postnatally.</text>
</comment>
<comment type="similarity">
    <text evidence="5">Belongs to the sodium:neurotransmitter symporter (SNF) (TC 2.A.22) family.</text>
</comment>
<proteinExistence type="evidence at protein level"/>